<feature type="chain" id="PRO_1000147157" description="Ribosomal RNA small subunit methyltransferase A">
    <location>
        <begin position="1"/>
        <end position="258"/>
    </location>
</feature>
<feature type="binding site" evidence="1">
    <location>
        <position position="13"/>
    </location>
    <ligand>
        <name>S-adenosyl-L-methionine</name>
        <dbReference type="ChEBI" id="CHEBI:59789"/>
    </ligand>
</feature>
<feature type="binding site" evidence="1">
    <location>
        <position position="15"/>
    </location>
    <ligand>
        <name>S-adenosyl-L-methionine</name>
        <dbReference type="ChEBI" id="CHEBI:59789"/>
    </ligand>
</feature>
<feature type="binding site" evidence="1">
    <location>
        <position position="40"/>
    </location>
    <ligand>
        <name>S-adenosyl-L-methionine</name>
        <dbReference type="ChEBI" id="CHEBI:59789"/>
    </ligand>
</feature>
<feature type="binding site" evidence="1">
    <location>
        <position position="62"/>
    </location>
    <ligand>
        <name>S-adenosyl-L-methionine</name>
        <dbReference type="ChEBI" id="CHEBI:59789"/>
    </ligand>
</feature>
<feature type="binding site" evidence="1">
    <location>
        <position position="87"/>
    </location>
    <ligand>
        <name>S-adenosyl-L-methionine</name>
        <dbReference type="ChEBI" id="CHEBI:59789"/>
    </ligand>
</feature>
<feature type="binding site" evidence="1">
    <location>
        <position position="108"/>
    </location>
    <ligand>
        <name>S-adenosyl-L-methionine</name>
        <dbReference type="ChEBI" id="CHEBI:59789"/>
    </ligand>
</feature>
<comment type="function">
    <text evidence="1">Specifically dimethylates two adjacent adenosines (A1518 and A1519) in the loop of a conserved hairpin near the 3'-end of 16S rRNA in the 30S particle. May play a critical role in biogenesis of 30S subunits.</text>
</comment>
<comment type="catalytic activity">
    <reaction evidence="1">
        <text>adenosine(1518)/adenosine(1519) in 16S rRNA + 4 S-adenosyl-L-methionine = N(6)-dimethyladenosine(1518)/N(6)-dimethyladenosine(1519) in 16S rRNA + 4 S-adenosyl-L-homocysteine + 4 H(+)</text>
        <dbReference type="Rhea" id="RHEA:19609"/>
        <dbReference type="Rhea" id="RHEA-COMP:10232"/>
        <dbReference type="Rhea" id="RHEA-COMP:10233"/>
        <dbReference type="ChEBI" id="CHEBI:15378"/>
        <dbReference type="ChEBI" id="CHEBI:57856"/>
        <dbReference type="ChEBI" id="CHEBI:59789"/>
        <dbReference type="ChEBI" id="CHEBI:74411"/>
        <dbReference type="ChEBI" id="CHEBI:74493"/>
        <dbReference type="EC" id="2.1.1.182"/>
    </reaction>
</comment>
<comment type="subcellular location">
    <subcellularLocation>
        <location evidence="1">Cytoplasm</location>
    </subcellularLocation>
</comment>
<comment type="similarity">
    <text evidence="1">Belongs to the class I-like SAM-binding methyltransferase superfamily. rRNA adenine N(6)-methyltransferase family. RsmA subfamily.</text>
</comment>
<sequence>MNKIKPKKRLGQHFLISKNVIEKIVDEINISKEDIIVEIGPGTGALTEEILLRNPKILYAIEIDTSVHPVLEEKFSIYSNFKLIKSDFFDVNLYELISDEEKIKLVGNLPYNVASLMIIDCAFKLDILEFCVFMIQKEVAEKLIAKPKTKDYTFLSVFIQTFFDIKYVMSVPARFFNPPPKVTSAVVKLTPKQNIAINNVKKYKNFISHLFQNRRKMIKSKIEEEMLNKAGISPNLRAEELSVEDFIRIFGVVENDDR</sequence>
<evidence type="ECO:0000255" key="1">
    <source>
        <dbReference type="HAMAP-Rule" id="MF_00607"/>
    </source>
</evidence>
<proteinExistence type="inferred from homology"/>
<accession>B2V963</accession>
<name>RSMA_SULSY</name>
<gene>
    <name evidence="1" type="primary">rsmA</name>
    <name evidence="1" type="synonym">ksgA</name>
    <name type="ordered locus">SYO3AOP1_0858</name>
</gene>
<organism>
    <name type="scientific">Sulfurihydrogenibium sp. (strain YO3AOP1)</name>
    <dbReference type="NCBI Taxonomy" id="436114"/>
    <lineage>
        <taxon>Bacteria</taxon>
        <taxon>Pseudomonadati</taxon>
        <taxon>Aquificota</taxon>
        <taxon>Aquificia</taxon>
        <taxon>Aquificales</taxon>
        <taxon>Hydrogenothermaceae</taxon>
        <taxon>Sulfurihydrogenibium</taxon>
    </lineage>
</organism>
<reference key="1">
    <citation type="journal article" date="2009" name="J. Bacteriol.">
        <title>Complete and draft genome sequences of six members of the Aquificales.</title>
        <authorList>
            <person name="Reysenbach A.-L."/>
            <person name="Hamamura N."/>
            <person name="Podar M."/>
            <person name="Griffiths E."/>
            <person name="Ferreira S."/>
            <person name="Hochstein R."/>
            <person name="Heidelberg J."/>
            <person name="Johnson J."/>
            <person name="Mead D."/>
            <person name="Pohorille A."/>
            <person name="Sarmiento M."/>
            <person name="Schweighofer K."/>
            <person name="Seshadri R."/>
            <person name="Voytek M.A."/>
        </authorList>
    </citation>
    <scope>NUCLEOTIDE SEQUENCE [LARGE SCALE GENOMIC DNA]</scope>
    <source>
        <strain>YO3AOP1</strain>
    </source>
</reference>
<keyword id="KW-0963">Cytoplasm</keyword>
<keyword id="KW-0489">Methyltransferase</keyword>
<keyword id="KW-0694">RNA-binding</keyword>
<keyword id="KW-0698">rRNA processing</keyword>
<keyword id="KW-0949">S-adenosyl-L-methionine</keyword>
<keyword id="KW-0808">Transferase</keyword>
<protein>
    <recommendedName>
        <fullName evidence="1">Ribosomal RNA small subunit methyltransferase A</fullName>
        <ecNumber evidence="1">2.1.1.182</ecNumber>
    </recommendedName>
    <alternativeName>
        <fullName evidence="1">16S rRNA (adenine(1518)-N(6)/adenine(1519)-N(6))-dimethyltransferase</fullName>
    </alternativeName>
    <alternativeName>
        <fullName evidence="1">16S rRNA dimethyladenosine transferase</fullName>
    </alternativeName>
    <alternativeName>
        <fullName evidence="1">16S rRNA dimethylase</fullName>
    </alternativeName>
    <alternativeName>
        <fullName evidence="1">S-adenosylmethionine-6-N', N'-adenosyl(rRNA) dimethyltransferase</fullName>
    </alternativeName>
</protein>
<dbReference type="EC" id="2.1.1.182" evidence="1"/>
<dbReference type="EMBL" id="CP001080">
    <property type="protein sequence ID" value="ACD66486.1"/>
    <property type="molecule type" value="Genomic_DNA"/>
</dbReference>
<dbReference type="RefSeq" id="WP_012459560.1">
    <property type="nucleotide sequence ID" value="NC_010730.1"/>
</dbReference>
<dbReference type="SMR" id="B2V963"/>
<dbReference type="STRING" id="436114.SYO3AOP1_0858"/>
<dbReference type="KEGG" id="sul:SYO3AOP1_0858"/>
<dbReference type="eggNOG" id="COG0030">
    <property type="taxonomic scope" value="Bacteria"/>
</dbReference>
<dbReference type="HOGENOM" id="CLU_041220_0_2_0"/>
<dbReference type="GO" id="GO:0005829">
    <property type="term" value="C:cytosol"/>
    <property type="evidence" value="ECO:0007669"/>
    <property type="project" value="TreeGrafter"/>
</dbReference>
<dbReference type="GO" id="GO:0052908">
    <property type="term" value="F:16S rRNA (adenine(1518)-N(6)/adenine(1519)-N(6))-dimethyltransferase activity"/>
    <property type="evidence" value="ECO:0007669"/>
    <property type="project" value="UniProtKB-EC"/>
</dbReference>
<dbReference type="GO" id="GO:0003723">
    <property type="term" value="F:RNA binding"/>
    <property type="evidence" value="ECO:0007669"/>
    <property type="project" value="UniProtKB-KW"/>
</dbReference>
<dbReference type="Gene3D" id="1.10.8.100">
    <property type="entry name" value="Ribosomal RNA adenine dimethylase-like, domain 2"/>
    <property type="match status" value="1"/>
</dbReference>
<dbReference type="Gene3D" id="3.40.50.150">
    <property type="entry name" value="Vaccinia Virus protein VP39"/>
    <property type="match status" value="1"/>
</dbReference>
<dbReference type="HAMAP" id="MF_00607">
    <property type="entry name" value="16SrRNA_methyltr_A"/>
    <property type="match status" value="1"/>
</dbReference>
<dbReference type="InterPro" id="IPR001737">
    <property type="entry name" value="KsgA/Erm"/>
</dbReference>
<dbReference type="InterPro" id="IPR023165">
    <property type="entry name" value="rRNA_Ade_diMease-like_C"/>
</dbReference>
<dbReference type="InterPro" id="IPR020596">
    <property type="entry name" value="rRNA_Ade_Mease_Trfase_CS"/>
</dbReference>
<dbReference type="InterPro" id="IPR020598">
    <property type="entry name" value="rRNA_Ade_methylase_Trfase_N"/>
</dbReference>
<dbReference type="InterPro" id="IPR011530">
    <property type="entry name" value="rRNA_adenine_dimethylase"/>
</dbReference>
<dbReference type="InterPro" id="IPR029063">
    <property type="entry name" value="SAM-dependent_MTases_sf"/>
</dbReference>
<dbReference type="NCBIfam" id="TIGR00755">
    <property type="entry name" value="ksgA"/>
    <property type="match status" value="1"/>
</dbReference>
<dbReference type="PANTHER" id="PTHR11727">
    <property type="entry name" value="DIMETHYLADENOSINE TRANSFERASE"/>
    <property type="match status" value="1"/>
</dbReference>
<dbReference type="PANTHER" id="PTHR11727:SF7">
    <property type="entry name" value="DIMETHYLADENOSINE TRANSFERASE-RELATED"/>
    <property type="match status" value="1"/>
</dbReference>
<dbReference type="Pfam" id="PF00398">
    <property type="entry name" value="RrnaAD"/>
    <property type="match status" value="1"/>
</dbReference>
<dbReference type="SMART" id="SM00650">
    <property type="entry name" value="rADc"/>
    <property type="match status" value="1"/>
</dbReference>
<dbReference type="SUPFAM" id="SSF53335">
    <property type="entry name" value="S-adenosyl-L-methionine-dependent methyltransferases"/>
    <property type="match status" value="1"/>
</dbReference>
<dbReference type="PROSITE" id="PS01131">
    <property type="entry name" value="RRNA_A_DIMETH"/>
    <property type="match status" value="1"/>
</dbReference>
<dbReference type="PROSITE" id="PS51689">
    <property type="entry name" value="SAM_RNA_A_N6_MT"/>
    <property type="match status" value="1"/>
</dbReference>